<sequence length="151" mass="16036">MKKIDVKILDPRVGQQFPLPTYATSGSAGLDLRACLDDAVELAPGATTLVPTGLAIHIADPSLAAVMLPRSGLGHKHGIVLGNLVGLIDSDYQGQLMVSIWNRGQDSFTIEPGERIAQMVFVPVVQAEFNLVEAFDATERGEGGFGHSGRK</sequence>
<evidence type="ECO:0000255" key="1">
    <source>
        <dbReference type="HAMAP-Rule" id="MF_00116"/>
    </source>
</evidence>
<comment type="function">
    <text evidence="1">This enzyme is involved in nucleotide metabolism: it produces dUMP, the immediate precursor of thymidine nucleotides and it decreases the intracellular concentration of dUTP so that uracil cannot be incorporated into DNA.</text>
</comment>
<comment type="catalytic activity">
    <reaction evidence="1">
        <text>dUTP + H2O = dUMP + diphosphate + H(+)</text>
        <dbReference type="Rhea" id="RHEA:10248"/>
        <dbReference type="ChEBI" id="CHEBI:15377"/>
        <dbReference type="ChEBI" id="CHEBI:15378"/>
        <dbReference type="ChEBI" id="CHEBI:33019"/>
        <dbReference type="ChEBI" id="CHEBI:61555"/>
        <dbReference type="ChEBI" id="CHEBI:246422"/>
        <dbReference type="EC" id="3.6.1.23"/>
    </reaction>
</comment>
<comment type="cofactor">
    <cofactor evidence="1">
        <name>Mg(2+)</name>
        <dbReference type="ChEBI" id="CHEBI:18420"/>
    </cofactor>
</comment>
<comment type="pathway">
    <text evidence="1">Pyrimidine metabolism; dUMP biosynthesis; dUMP from dCTP (dUTP route): step 2/2.</text>
</comment>
<comment type="similarity">
    <text evidence="1">Belongs to the dUTPase family.</text>
</comment>
<accession>B5R5G4</accession>
<protein>
    <recommendedName>
        <fullName evidence="1">Deoxyuridine 5'-triphosphate nucleotidohydrolase</fullName>
        <shortName evidence="1">dUTPase</shortName>
        <ecNumber evidence="1">3.6.1.23</ecNumber>
    </recommendedName>
    <alternativeName>
        <fullName evidence="1">dUTP pyrophosphatase</fullName>
    </alternativeName>
</protein>
<gene>
    <name evidence="1" type="primary">dut</name>
    <name type="ordered locus">SEN3553</name>
</gene>
<reference key="1">
    <citation type="journal article" date="2008" name="Genome Res.">
        <title>Comparative genome analysis of Salmonella enteritidis PT4 and Salmonella gallinarum 287/91 provides insights into evolutionary and host adaptation pathways.</title>
        <authorList>
            <person name="Thomson N.R."/>
            <person name="Clayton D.J."/>
            <person name="Windhorst D."/>
            <person name="Vernikos G."/>
            <person name="Davidson S."/>
            <person name="Churcher C."/>
            <person name="Quail M.A."/>
            <person name="Stevens M."/>
            <person name="Jones M.A."/>
            <person name="Watson M."/>
            <person name="Barron A."/>
            <person name="Layton A."/>
            <person name="Pickard D."/>
            <person name="Kingsley R.A."/>
            <person name="Bignell A."/>
            <person name="Clark L."/>
            <person name="Harris B."/>
            <person name="Ormond D."/>
            <person name="Abdellah Z."/>
            <person name="Brooks K."/>
            <person name="Cherevach I."/>
            <person name="Chillingworth T."/>
            <person name="Woodward J."/>
            <person name="Norberczak H."/>
            <person name="Lord A."/>
            <person name="Arrowsmith C."/>
            <person name="Jagels K."/>
            <person name="Moule S."/>
            <person name="Mungall K."/>
            <person name="Saunders M."/>
            <person name="Whitehead S."/>
            <person name="Chabalgoity J.A."/>
            <person name="Maskell D."/>
            <person name="Humphreys T."/>
            <person name="Roberts M."/>
            <person name="Barrow P.A."/>
            <person name="Dougan G."/>
            <person name="Parkhill J."/>
        </authorList>
    </citation>
    <scope>NUCLEOTIDE SEQUENCE [LARGE SCALE GENOMIC DNA]</scope>
    <source>
        <strain>P125109</strain>
    </source>
</reference>
<dbReference type="EC" id="3.6.1.23" evidence="1"/>
<dbReference type="EMBL" id="AM933172">
    <property type="protein sequence ID" value="CAR35132.1"/>
    <property type="molecule type" value="Genomic_DNA"/>
</dbReference>
<dbReference type="SMR" id="B5R5G4"/>
<dbReference type="KEGG" id="set:SEN3553"/>
<dbReference type="HOGENOM" id="CLU_068508_1_1_6"/>
<dbReference type="UniPathway" id="UPA00610">
    <property type="reaction ID" value="UER00666"/>
</dbReference>
<dbReference type="Proteomes" id="UP000000613">
    <property type="component" value="Chromosome"/>
</dbReference>
<dbReference type="GO" id="GO:0004170">
    <property type="term" value="F:dUTP diphosphatase activity"/>
    <property type="evidence" value="ECO:0007669"/>
    <property type="project" value="UniProtKB-UniRule"/>
</dbReference>
<dbReference type="GO" id="GO:0000287">
    <property type="term" value="F:magnesium ion binding"/>
    <property type="evidence" value="ECO:0007669"/>
    <property type="project" value="UniProtKB-UniRule"/>
</dbReference>
<dbReference type="GO" id="GO:0006226">
    <property type="term" value="P:dUMP biosynthetic process"/>
    <property type="evidence" value="ECO:0007669"/>
    <property type="project" value="UniProtKB-UniRule"/>
</dbReference>
<dbReference type="GO" id="GO:0046081">
    <property type="term" value="P:dUTP catabolic process"/>
    <property type="evidence" value="ECO:0007669"/>
    <property type="project" value="InterPro"/>
</dbReference>
<dbReference type="CDD" id="cd07557">
    <property type="entry name" value="trimeric_dUTPase"/>
    <property type="match status" value="1"/>
</dbReference>
<dbReference type="FunFam" id="2.70.40.10:FF:000002">
    <property type="entry name" value="dUTP diphosphatase"/>
    <property type="match status" value="1"/>
</dbReference>
<dbReference type="Gene3D" id="2.70.40.10">
    <property type="match status" value="1"/>
</dbReference>
<dbReference type="HAMAP" id="MF_00116">
    <property type="entry name" value="dUTPase_bact"/>
    <property type="match status" value="1"/>
</dbReference>
<dbReference type="InterPro" id="IPR008181">
    <property type="entry name" value="dUTPase"/>
</dbReference>
<dbReference type="InterPro" id="IPR029054">
    <property type="entry name" value="dUTPase-like"/>
</dbReference>
<dbReference type="InterPro" id="IPR036157">
    <property type="entry name" value="dUTPase-like_sf"/>
</dbReference>
<dbReference type="InterPro" id="IPR033704">
    <property type="entry name" value="dUTPase_trimeric"/>
</dbReference>
<dbReference type="NCBIfam" id="TIGR00576">
    <property type="entry name" value="dut"/>
    <property type="match status" value="1"/>
</dbReference>
<dbReference type="NCBIfam" id="NF001862">
    <property type="entry name" value="PRK00601.1"/>
    <property type="match status" value="1"/>
</dbReference>
<dbReference type="PANTHER" id="PTHR11241">
    <property type="entry name" value="DEOXYURIDINE 5'-TRIPHOSPHATE NUCLEOTIDOHYDROLASE"/>
    <property type="match status" value="1"/>
</dbReference>
<dbReference type="PANTHER" id="PTHR11241:SF0">
    <property type="entry name" value="DEOXYURIDINE 5'-TRIPHOSPHATE NUCLEOTIDOHYDROLASE"/>
    <property type="match status" value="1"/>
</dbReference>
<dbReference type="Pfam" id="PF00692">
    <property type="entry name" value="dUTPase"/>
    <property type="match status" value="1"/>
</dbReference>
<dbReference type="SUPFAM" id="SSF51283">
    <property type="entry name" value="dUTPase-like"/>
    <property type="match status" value="1"/>
</dbReference>
<name>DUT_SALEP</name>
<keyword id="KW-0378">Hydrolase</keyword>
<keyword id="KW-0460">Magnesium</keyword>
<keyword id="KW-0479">Metal-binding</keyword>
<keyword id="KW-0546">Nucleotide metabolism</keyword>
<feature type="chain" id="PRO_1000094988" description="Deoxyuridine 5'-triphosphate nucleotidohydrolase">
    <location>
        <begin position="1"/>
        <end position="151"/>
    </location>
</feature>
<feature type="binding site" evidence="1">
    <location>
        <begin position="70"/>
        <end position="72"/>
    </location>
    <ligand>
        <name>substrate</name>
    </ligand>
</feature>
<feature type="binding site" evidence="1">
    <location>
        <position position="83"/>
    </location>
    <ligand>
        <name>substrate</name>
    </ligand>
</feature>
<feature type="binding site" evidence="1">
    <location>
        <begin position="87"/>
        <end position="89"/>
    </location>
    <ligand>
        <name>substrate</name>
    </ligand>
</feature>
<feature type="binding site" evidence="1">
    <location>
        <position position="97"/>
    </location>
    <ligand>
        <name>substrate</name>
    </ligand>
</feature>
<proteinExistence type="inferred from homology"/>
<organism>
    <name type="scientific">Salmonella enteritidis PT4 (strain P125109)</name>
    <dbReference type="NCBI Taxonomy" id="550537"/>
    <lineage>
        <taxon>Bacteria</taxon>
        <taxon>Pseudomonadati</taxon>
        <taxon>Pseudomonadota</taxon>
        <taxon>Gammaproteobacteria</taxon>
        <taxon>Enterobacterales</taxon>
        <taxon>Enterobacteriaceae</taxon>
        <taxon>Salmonella</taxon>
    </lineage>
</organism>